<comment type="function">
    <text evidence="1">Catalyzes the irreversible cleavage of the glycosidic bond in both 5'-methylthioadenosine (MTA) and S-adenosylhomocysteine (SAH/AdoHcy) to adenine and the corresponding thioribose, 5'-methylthioribose and S-ribosylhomocysteine, respectively. Also cleaves 5'-deoxyadenosine, a toxic by-product of radical S-adenosylmethionine (SAM) enzymes, into 5-deoxyribose and adenine.</text>
</comment>
<comment type="catalytic activity">
    <reaction evidence="1">
        <text>S-adenosyl-L-homocysteine + H2O = S-(5-deoxy-D-ribos-5-yl)-L-homocysteine + adenine</text>
        <dbReference type="Rhea" id="RHEA:17805"/>
        <dbReference type="ChEBI" id="CHEBI:15377"/>
        <dbReference type="ChEBI" id="CHEBI:16708"/>
        <dbReference type="ChEBI" id="CHEBI:57856"/>
        <dbReference type="ChEBI" id="CHEBI:58195"/>
        <dbReference type="EC" id="3.2.2.9"/>
    </reaction>
</comment>
<comment type="catalytic activity">
    <reaction evidence="1">
        <text>S-methyl-5'-thioadenosine + H2O = 5-(methylsulfanyl)-D-ribose + adenine</text>
        <dbReference type="Rhea" id="RHEA:13617"/>
        <dbReference type="ChEBI" id="CHEBI:15377"/>
        <dbReference type="ChEBI" id="CHEBI:16708"/>
        <dbReference type="ChEBI" id="CHEBI:17509"/>
        <dbReference type="ChEBI" id="CHEBI:78440"/>
        <dbReference type="EC" id="3.2.2.9"/>
    </reaction>
</comment>
<comment type="catalytic activity">
    <reaction evidence="1">
        <text>5'-deoxyadenosine + H2O = 5-deoxy-D-ribose + adenine</text>
        <dbReference type="Rhea" id="RHEA:29859"/>
        <dbReference type="ChEBI" id="CHEBI:15377"/>
        <dbReference type="ChEBI" id="CHEBI:16708"/>
        <dbReference type="ChEBI" id="CHEBI:17319"/>
        <dbReference type="ChEBI" id="CHEBI:149540"/>
        <dbReference type="EC" id="3.2.2.9"/>
    </reaction>
    <physiologicalReaction direction="left-to-right" evidence="1">
        <dbReference type="Rhea" id="RHEA:29860"/>
    </physiologicalReaction>
</comment>
<comment type="pathway">
    <text evidence="1">Amino-acid biosynthesis; L-methionine biosynthesis via salvage pathway; S-methyl-5-thio-alpha-D-ribose 1-phosphate from S-methyl-5'-thioadenosine (hydrolase route): step 1/2.</text>
</comment>
<comment type="similarity">
    <text evidence="1">Belongs to the PNP/UDP phosphorylase family. MtnN subfamily.</text>
</comment>
<accession>B3H2N4</accession>
<feature type="chain" id="PRO_0000359267" description="5'-methylthioadenosine/S-adenosylhomocysteine nucleosidase">
    <location>
        <begin position="1"/>
        <end position="232"/>
    </location>
</feature>
<feature type="active site" description="Proton acceptor" evidence="1">
    <location>
        <position position="14"/>
    </location>
</feature>
<feature type="active site" description="Proton donor" evidence="1">
    <location>
        <position position="199"/>
    </location>
</feature>
<feature type="binding site" evidence="1">
    <location>
        <position position="80"/>
    </location>
    <ligand>
        <name>substrate</name>
    </ligand>
</feature>
<feature type="binding site" evidence="1">
    <location>
        <position position="154"/>
    </location>
    <ligand>
        <name>substrate</name>
    </ligand>
</feature>
<feature type="binding site" evidence="1">
    <location>
        <begin position="175"/>
        <end position="176"/>
    </location>
    <ligand>
        <name>substrate</name>
    </ligand>
</feature>
<evidence type="ECO:0000255" key="1">
    <source>
        <dbReference type="HAMAP-Rule" id="MF_01684"/>
    </source>
</evidence>
<proteinExistence type="inferred from homology"/>
<sequence length="232" mass="24412">MRLKIGIIGAMAQEVEILRNLMVEAKVIEIAGCKIYDGKINNTQVALLQSGIGKVAAAVGTALLLELTKPDVIINTGSAGGLDANLNVGDIVISTEVRHHDADVTAFGYEKGQLPANPAAFLPNEQLVSVALKETQTAGFNAVSGLICSGDVFVNGAEKIAQIRQDFPNVAAVEMEAAAIAQVCHAFNVPFVVVRAISDVADKESHLSFDEFLPLAAKNSSEIVVAMLNNFA</sequence>
<organism>
    <name type="scientific">Actinobacillus pleuropneumoniae serotype 7 (strain AP76)</name>
    <dbReference type="NCBI Taxonomy" id="537457"/>
    <lineage>
        <taxon>Bacteria</taxon>
        <taxon>Pseudomonadati</taxon>
        <taxon>Pseudomonadota</taxon>
        <taxon>Gammaproteobacteria</taxon>
        <taxon>Pasteurellales</taxon>
        <taxon>Pasteurellaceae</taxon>
        <taxon>Actinobacillus</taxon>
    </lineage>
</organism>
<reference key="1">
    <citation type="submission" date="2008-06" db="EMBL/GenBank/DDBJ databases">
        <title>Genome and proteome analysis of A. pleuropneumoniae serotype 7.</title>
        <authorList>
            <person name="Linke B."/>
            <person name="Buettner F."/>
            <person name="Martinez-Arias R."/>
            <person name="Goesmann A."/>
            <person name="Baltes N."/>
            <person name="Tegetmeyer H."/>
            <person name="Singh M."/>
            <person name="Gerlach G.F."/>
        </authorList>
    </citation>
    <scope>NUCLEOTIDE SEQUENCE [LARGE SCALE GENOMIC DNA]</scope>
    <source>
        <strain>AP76</strain>
    </source>
</reference>
<protein>
    <recommendedName>
        <fullName evidence="1">5'-methylthioadenosine/S-adenosylhomocysteine nucleosidase</fullName>
        <shortName evidence="1">MTA/SAH nucleosidase</shortName>
        <shortName evidence="1">MTAN</shortName>
        <ecNumber evidence="1">3.2.2.9</ecNumber>
    </recommendedName>
    <alternativeName>
        <fullName evidence="1">5'-deoxyadenosine nucleosidase</fullName>
        <shortName evidence="1">DOA nucleosidase</shortName>
        <shortName evidence="1">dAdo nucleosidase</shortName>
    </alternativeName>
    <alternativeName>
        <fullName evidence="1">5'-methylthioadenosine nucleosidase</fullName>
        <shortName evidence="1">MTA nucleosidase</shortName>
    </alternativeName>
    <alternativeName>
        <fullName evidence="1">S-adenosylhomocysteine nucleosidase</fullName>
        <shortName evidence="1">AdoHcy nucleosidase</shortName>
        <shortName evidence="1">SAH nucleosidase</shortName>
        <shortName evidence="1">SRH nucleosidase</shortName>
    </alternativeName>
</protein>
<dbReference type="EC" id="3.2.2.9" evidence="1"/>
<dbReference type="EMBL" id="CP001091">
    <property type="protein sequence ID" value="ACE62351.1"/>
    <property type="molecule type" value="Genomic_DNA"/>
</dbReference>
<dbReference type="RefSeq" id="WP_005605632.1">
    <property type="nucleotide sequence ID" value="NC_010939.1"/>
</dbReference>
<dbReference type="SMR" id="B3H2N4"/>
<dbReference type="KEGG" id="apa:APP7_1699"/>
<dbReference type="HOGENOM" id="CLU_031248_2_2_6"/>
<dbReference type="UniPathway" id="UPA00904">
    <property type="reaction ID" value="UER00871"/>
</dbReference>
<dbReference type="Proteomes" id="UP000001226">
    <property type="component" value="Chromosome"/>
</dbReference>
<dbReference type="GO" id="GO:0005829">
    <property type="term" value="C:cytosol"/>
    <property type="evidence" value="ECO:0007669"/>
    <property type="project" value="TreeGrafter"/>
</dbReference>
<dbReference type="GO" id="GO:0008782">
    <property type="term" value="F:adenosylhomocysteine nucleosidase activity"/>
    <property type="evidence" value="ECO:0007669"/>
    <property type="project" value="UniProtKB-UniRule"/>
</dbReference>
<dbReference type="GO" id="GO:0008930">
    <property type="term" value="F:methylthioadenosine nucleosidase activity"/>
    <property type="evidence" value="ECO:0007669"/>
    <property type="project" value="UniProtKB-UniRule"/>
</dbReference>
<dbReference type="GO" id="GO:0019509">
    <property type="term" value="P:L-methionine salvage from methylthioadenosine"/>
    <property type="evidence" value="ECO:0007669"/>
    <property type="project" value="UniProtKB-UniRule"/>
</dbReference>
<dbReference type="GO" id="GO:0019284">
    <property type="term" value="P:L-methionine salvage from S-adenosylmethionine"/>
    <property type="evidence" value="ECO:0007669"/>
    <property type="project" value="TreeGrafter"/>
</dbReference>
<dbReference type="GO" id="GO:0009164">
    <property type="term" value="P:nucleoside catabolic process"/>
    <property type="evidence" value="ECO:0007669"/>
    <property type="project" value="InterPro"/>
</dbReference>
<dbReference type="CDD" id="cd09008">
    <property type="entry name" value="MTAN"/>
    <property type="match status" value="1"/>
</dbReference>
<dbReference type="FunFam" id="3.40.50.1580:FF:000001">
    <property type="entry name" value="MTA/SAH nucleosidase family protein"/>
    <property type="match status" value="1"/>
</dbReference>
<dbReference type="Gene3D" id="3.40.50.1580">
    <property type="entry name" value="Nucleoside phosphorylase domain"/>
    <property type="match status" value="1"/>
</dbReference>
<dbReference type="HAMAP" id="MF_01684">
    <property type="entry name" value="Salvage_MtnN"/>
    <property type="match status" value="1"/>
</dbReference>
<dbReference type="InterPro" id="IPR010049">
    <property type="entry name" value="MTA_SAH_Nsdase"/>
</dbReference>
<dbReference type="InterPro" id="IPR000845">
    <property type="entry name" value="Nucleoside_phosphorylase_d"/>
</dbReference>
<dbReference type="InterPro" id="IPR035994">
    <property type="entry name" value="Nucleoside_phosphorylase_sf"/>
</dbReference>
<dbReference type="NCBIfam" id="TIGR01704">
    <property type="entry name" value="MTA_SAH-Nsdase"/>
    <property type="match status" value="1"/>
</dbReference>
<dbReference type="NCBIfam" id="NF004079">
    <property type="entry name" value="PRK05584.1"/>
    <property type="match status" value="1"/>
</dbReference>
<dbReference type="PANTHER" id="PTHR46832">
    <property type="entry name" value="5'-METHYLTHIOADENOSINE/S-ADENOSYLHOMOCYSTEINE NUCLEOSIDASE"/>
    <property type="match status" value="1"/>
</dbReference>
<dbReference type="PANTHER" id="PTHR46832:SF1">
    <property type="entry name" value="5'-METHYLTHIOADENOSINE_S-ADENOSYLHOMOCYSTEINE NUCLEOSIDASE"/>
    <property type="match status" value="1"/>
</dbReference>
<dbReference type="Pfam" id="PF01048">
    <property type="entry name" value="PNP_UDP_1"/>
    <property type="match status" value="1"/>
</dbReference>
<dbReference type="SUPFAM" id="SSF53167">
    <property type="entry name" value="Purine and uridine phosphorylases"/>
    <property type="match status" value="1"/>
</dbReference>
<keyword id="KW-0028">Amino-acid biosynthesis</keyword>
<keyword id="KW-0378">Hydrolase</keyword>
<keyword id="KW-0486">Methionine biosynthesis</keyword>
<gene>
    <name evidence="1" type="primary">mtnN</name>
    <name type="ordered locus">APP7_1699</name>
</gene>
<name>MTNN_ACTP7</name>